<feature type="chain" id="PRO_1000015427" description="Large-conductance mechanosensitive channel">
    <location>
        <begin position="1"/>
        <end position="136"/>
    </location>
</feature>
<feature type="transmembrane region" description="Helical" evidence="1">
    <location>
        <begin position="9"/>
        <end position="29"/>
    </location>
</feature>
<feature type="transmembrane region" description="Helical" evidence="1">
    <location>
        <begin position="79"/>
        <end position="99"/>
    </location>
</feature>
<organism>
    <name type="scientific">Shewanella sp. (strain MR-4)</name>
    <dbReference type="NCBI Taxonomy" id="60480"/>
    <lineage>
        <taxon>Bacteria</taxon>
        <taxon>Pseudomonadati</taxon>
        <taxon>Pseudomonadota</taxon>
        <taxon>Gammaproteobacteria</taxon>
        <taxon>Alteromonadales</taxon>
        <taxon>Shewanellaceae</taxon>
        <taxon>Shewanella</taxon>
    </lineage>
</organism>
<evidence type="ECO:0000255" key="1">
    <source>
        <dbReference type="HAMAP-Rule" id="MF_00115"/>
    </source>
</evidence>
<reference key="1">
    <citation type="submission" date="2006-08" db="EMBL/GenBank/DDBJ databases">
        <title>Complete sequence of Shewanella sp. MR-4.</title>
        <authorList>
            <consortium name="US DOE Joint Genome Institute"/>
            <person name="Copeland A."/>
            <person name="Lucas S."/>
            <person name="Lapidus A."/>
            <person name="Barry K."/>
            <person name="Detter J.C."/>
            <person name="Glavina del Rio T."/>
            <person name="Hammon N."/>
            <person name="Israni S."/>
            <person name="Dalin E."/>
            <person name="Tice H."/>
            <person name="Pitluck S."/>
            <person name="Kiss H."/>
            <person name="Brettin T."/>
            <person name="Bruce D."/>
            <person name="Han C."/>
            <person name="Tapia R."/>
            <person name="Gilna P."/>
            <person name="Schmutz J."/>
            <person name="Larimer F."/>
            <person name="Land M."/>
            <person name="Hauser L."/>
            <person name="Kyrpides N."/>
            <person name="Mikhailova N."/>
            <person name="Nealson K."/>
            <person name="Konstantinidis K."/>
            <person name="Klappenbach J."/>
            <person name="Tiedje J."/>
            <person name="Richardson P."/>
        </authorList>
    </citation>
    <scope>NUCLEOTIDE SEQUENCE [LARGE SCALE GENOMIC DNA]</scope>
    <source>
        <strain>MR-4</strain>
    </source>
</reference>
<accession>Q0HMW6</accession>
<comment type="function">
    <text evidence="1">Channel that opens in response to stretch forces in the membrane lipid bilayer. May participate in the regulation of osmotic pressure changes within the cell.</text>
</comment>
<comment type="subunit">
    <text evidence="1">Homopentamer.</text>
</comment>
<comment type="subcellular location">
    <subcellularLocation>
        <location evidence="1">Cell inner membrane</location>
        <topology evidence="1">Multi-pass membrane protein</topology>
    </subcellularLocation>
</comment>
<comment type="similarity">
    <text evidence="1">Belongs to the MscL family.</text>
</comment>
<dbReference type="EMBL" id="CP000446">
    <property type="protein sequence ID" value="ABI37601.1"/>
    <property type="molecule type" value="Genomic_DNA"/>
</dbReference>
<dbReference type="RefSeq" id="WP_011621323.1">
    <property type="nucleotide sequence ID" value="NC_008321.1"/>
</dbReference>
<dbReference type="SMR" id="Q0HMW6"/>
<dbReference type="GeneID" id="94726510"/>
<dbReference type="KEGG" id="she:Shewmr4_0521"/>
<dbReference type="HOGENOM" id="CLU_095787_0_0_6"/>
<dbReference type="GO" id="GO:0005886">
    <property type="term" value="C:plasma membrane"/>
    <property type="evidence" value="ECO:0007669"/>
    <property type="project" value="UniProtKB-SubCell"/>
</dbReference>
<dbReference type="GO" id="GO:0008381">
    <property type="term" value="F:mechanosensitive monoatomic ion channel activity"/>
    <property type="evidence" value="ECO:0007669"/>
    <property type="project" value="UniProtKB-UniRule"/>
</dbReference>
<dbReference type="FunFam" id="1.10.1200.120:FF:000001">
    <property type="entry name" value="Large-conductance mechanosensitive channel"/>
    <property type="match status" value="1"/>
</dbReference>
<dbReference type="Gene3D" id="1.10.1200.120">
    <property type="entry name" value="Large-conductance mechanosensitive channel, MscL, domain 1"/>
    <property type="match status" value="1"/>
</dbReference>
<dbReference type="HAMAP" id="MF_00115">
    <property type="entry name" value="MscL"/>
    <property type="match status" value="1"/>
</dbReference>
<dbReference type="InterPro" id="IPR019823">
    <property type="entry name" value="Mechanosensitive_channel_CS"/>
</dbReference>
<dbReference type="InterPro" id="IPR001185">
    <property type="entry name" value="MS_channel"/>
</dbReference>
<dbReference type="InterPro" id="IPR037673">
    <property type="entry name" value="MSC/AndL"/>
</dbReference>
<dbReference type="InterPro" id="IPR036019">
    <property type="entry name" value="MscL_channel"/>
</dbReference>
<dbReference type="NCBIfam" id="TIGR00220">
    <property type="entry name" value="mscL"/>
    <property type="match status" value="1"/>
</dbReference>
<dbReference type="NCBIfam" id="NF001843">
    <property type="entry name" value="PRK00567.1-4"/>
    <property type="match status" value="1"/>
</dbReference>
<dbReference type="PANTHER" id="PTHR30266:SF2">
    <property type="entry name" value="LARGE-CONDUCTANCE MECHANOSENSITIVE CHANNEL"/>
    <property type="match status" value="1"/>
</dbReference>
<dbReference type="PANTHER" id="PTHR30266">
    <property type="entry name" value="MECHANOSENSITIVE CHANNEL MSCL"/>
    <property type="match status" value="1"/>
</dbReference>
<dbReference type="Pfam" id="PF01741">
    <property type="entry name" value="MscL"/>
    <property type="match status" value="1"/>
</dbReference>
<dbReference type="PRINTS" id="PR01264">
    <property type="entry name" value="MECHCHANNEL"/>
</dbReference>
<dbReference type="SUPFAM" id="SSF81330">
    <property type="entry name" value="Gated mechanosensitive channel"/>
    <property type="match status" value="1"/>
</dbReference>
<dbReference type="PROSITE" id="PS01327">
    <property type="entry name" value="MSCL"/>
    <property type="match status" value="1"/>
</dbReference>
<name>MSCL_SHESM</name>
<gene>
    <name evidence="1" type="primary">mscL</name>
    <name type="ordered locus">Shewmr4_0521</name>
</gene>
<protein>
    <recommendedName>
        <fullName evidence="1">Large-conductance mechanosensitive channel</fullName>
    </recommendedName>
</protein>
<keyword id="KW-0997">Cell inner membrane</keyword>
<keyword id="KW-1003">Cell membrane</keyword>
<keyword id="KW-0407">Ion channel</keyword>
<keyword id="KW-0406">Ion transport</keyword>
<keyword id="KW-0472">Membrane</keyword>
<keyword id="KW-0812">Transmembrane</keyword>
<keyword id="KW-1133">Transmembrane helix</keyword>
<keyword id="KW-0813">Transport</keyword>
<proteinExistence type="inferred from homology"/>
<sequence length="136" mass="14545">MSLIKEFKAFASRGNVIDMAVGIIIGAAFGKIVSSFVADIIMPPIGIILGGVNFSDLSIVLQAAQGDAPAVVIAYGKFIQTVIDFTIIAFAIFMGLKAINSLKRKQEEAPKAPPAPTKDQELLSEIRDLLKAQQEK</sequence>